<feature type="chain" id="PRO_0000375044" description="Ribosomal protein uS12 methylthiotransferase RimO">
    <location>
        <begin position="1"/>
        <end position="436"/>
    </location>
</feature>
<feature type="domain" description="MTTase N-terminal" evidence="1">
    <location>
        <begin position="2"/>
        <end position="117"/>
    </location>
</feature>
<feature type="domain" description="Radical SAM core" evidence="2">
    <location>
        <begin position="140"/>
        <end position="369"/>
    </location>
</feature>
<feature type="domain" description="TRAM" evidence="1">
    <location>
        <begin position="372"/>
        <end position="436"/>
    </location>
</feature>
<feature type="binding site" evidence="1">
    <location>
        <position position="11"/>
    </location>
    <ligand>
        <name>[4Fe-4S] cluster</name>
        <dbReference type="ChEBI" id="CHEBI:49883"/>
        <label>1</label>
    </ligand>
</feature>
<feature type="binding site" evidence="1">
    <location>
        <position position="47"/>
    </location>
    <ligand>
        <name>[4Fe-4S] cluster</name>
        <dbReference type="ChEBI" id="CHEBI:49883"/>
        <label>1</label>
    </ligand>
</feature>
<feature type="binding site" evidence="1">
    <location>
        <position position="80"/>
    </location>
    <ligand>
        <name>[4Fe-4S] cluster</name>
        <dbReference type="ChEBI" id="CHEBI:49883"/>
        <label>1</label>
    </ligand>
</feature>
<feature type="binding site" evidence="1">
    <location>
        <position position="154"/>
    </location>
    <ligand>
        <name>[4Fe-4S] cluster</name>
        <dbReference type="ChEBI" id="CHEBI:49883"/>
        <label>2</label>
        <note>4Fe-4S-S-AdoMet</note>
    </ligand>
</feature>
<feature type="binding site" evidence="1">
    <location>
        <position position="158"/>
    </location>
    <ligand>
        <name>[4Fe-4S] cluster</name>
        <dbReference type="ChEBI" id="CHEBI:49883"/>
        <label>2</label>
        <note>4Fe-4S-S-AdoMet</note>
    </ligand>
</feature>
<feature type="binding site" evidence="1">
    <location>
        <position position="161"/>
    </location>
    <ligand>
        <name>[4Fe-4S] cluster</name>
        <dbReference type="ChEBI" id="CHEBI:49883"/>
        <label>2</label>
        <note>4Fe-4S-S-AdoMet</note>
    </ligand>
</feature>
<gene>
    <name evidence="1" type="primary">rimO</name>
    <name type="ordered locus">Teth514_1630</name>
</gene>
<comment type="function">
    <text evidence="1">Catalyzes the methylthiolation of an aspartic acid residue of ribosomal protein uS12.</text>
</comment>
<comment type="catalytic activity">
    <reaction evidence="1">
        <text>L-aspartate(89)-[ribosomal protein uS12]-hydrogen + (sulfur carrier)-SH + AH2 + 2 S-adenosyl-L-methionine = 3-methylsulfanyl-L-aspartate(89)-[ribosomal protein uS12]-hydrogen + (sulfur carrier)-H + 5'-deoxyadenosine + L-methionine + A + S-adenosyl-L-homocysteine + 2 H(+)</text>
        <dbReference type="Rhea" id="RHEA:37087"/>
        <dbReference type="Rhea" id="RHEA-COMP:10460"/>
        <dbReference type="Rhea" id="RHEA-COMP:10461"/>
        <dbReference type="Rhea" id="RHEA-COMP:14737"/>
        <dbReference type="Rhea" id="RHEA-COMP:14739"/>
        <dbReference type="ChEBI" id="CHEBI:13193"/>
        <dbReference type="ChEBI" id="CHEBI:15378"/>
        <dbReference type="ChEBI" id="CHEBI:17319"/>
        <dbReference type="ChEBI" id="CHEBI:17499"/>
        <dbReference type="ChEBI" id="CHEBI:29917"/>
        <dbReference type="ChEBI" id="CHEBI:29961"/>
        <dbReference type="ChEBI" id="CHEBI:57844"/>
        <dbReference type="ChEBI" id="CHEBI:57856"/>
        <dbReference type="ChEBI" id="CHEBI:59789"/>
        <dbReference type="ChEBI" id="CHEBI:64428"/>
        <dbReference type="ChEBI" id="CHEBI:73599"/>
        <dbReference type="EC" id="2.8.4.4"/>
    </reaction>
</comment>
<comment type="cofactor">
    <cofactor evidence="1">
        <name>[4Fe-4S] cluster</name>
        <dbReference type="ChEBI" id="CHEBI:49883"/>
    </cofactor>
    <text evidence="1">Binds 2 [4Fe-4S] clusters. One cluster is coordinated with 3 cysteines and an exchangeable S-adenosyl-L-methionine.</text>
</comment>
<comment type="subcellular location">
    <subcellularLocation>
        <location evidence="1">Cytoplasm</location>
    </subcellularLocation>
</comment>
<comment type="similarity">
    <text evidence="1">Belongs to the methylthiotransferase family. RimO subfamily.</text>
</comment>
<keyword id="KW-0004">4Fe-4S</keyword>
<keyword id="KW-0963">Cytoplasm</keyword>
<keyword id="KW-0408">Iron</keyword>
<keyword id="KW-0411">Iron-sulfur</keyword>
<keyword id="KW-0479">Metal-binding</keyword>
<keyword id="KW-0949">S-adenosyl-L-methionine</keyword>
<keyword id="KW-0808">Transferase</keyword>
<dbReference type="EC" id="2.8.4.4" evidence="1"/>
<dbReference type="EMBL" id="CP000923">
    <property type="protein sequence ID" value="ABY92916.1"/>
    <property type="molecule type" value="Genomic_DNA"/>
</dbReference>
<dbReference type="RefSeq" id="WP_003866769.1">
    <property type="nucleotide sequence ID" value="NC_010320.1"/>
</dbReference>
<dbReference type="SMR" id="B0K1C1"/>
<dbReference type="KEGG" id="tex:Teth514_1630"/>
<dbReference type="HOGENOM" id="CLU_018697_0_1_9"/>
<dbReference type="Proteomes" id="UP000002155">
    <property type="component" value="Chromosome"/>
</dbReference>
<dbReference type="GO" id="GO:0005829">
    <property type="term" value="C:cytosol"/>
    <property type="evidence" value="ECO:0007669"/>
    <property type="project" value="TreeGrafter"/>
</dbReference>
<dbReference type="GO" id="GO:0051539">
    <property type="term" value="F:4 iron, 4 sulfur cluster binding"/>
    <property type="evidence" value="ECO:0007669"/>
    <property type="project" value="UniProtKB-UniRule"/>
</dbReference>
<dbReference type="GO" id="GO:0035599">
    <property type="term" value="F:aspartic acid methylthiotransferase activity"/>
    <property type="evidence" value="ECO:0007669"/>
    <property type="project" value="TreeGrafter"/>
</dbReference>
<dbReference type="GO" id="GO:0046872">
    <property type="term" value="F:metal ion binding"/>
    <property type="evidence" value="ECO:0007669"/>
    <property type="project" value="UniProtKB-KW"/>
</dbReference>
<dbReference type="GO" id="GO:0103039">
    <property type="term" value="F:protein methylthiotransferase activity"/>
    <property type="evidence" value="ECO:0007669"/>
    <property type="project" value="UniProtKB-EC"/>
</dbReference>
<dbReference type="GO" id="GO:0006400">
    <property type="term" value="P:tRNA modification"/>
    <property type="evidence" value="ECO:0007669"/>
    <property type="project" value="InterPro"/>
</dbReference>
<dbReference type="CDD" id="cd01335">
    <property type="entry name" value="Radical_SAM"/>
    <property type="match status" value="1"/>
</dbReference>
<dbReference type="FunFam" id="3.40.50.12160:FF:000003">
    <property type="entry name" value="CDK5 regulatory subunit-associated protein 1"/>
    <property type="match status" value="1"/>
</dbReference>
<dbReference type="FunFam" id="2.40.50.140:FF:000210">
    <property type="entry name" value="Ribosomal protein S12 methylthiotransferase RimO"/>
    <property type="match status" value="1"/>
</dbReference>
<dbReference type="FunFam" id="3.80.30.20:FF:000001">
    <property type="entry name" value="tRNA-2-methylthio-N(6)-dimethylallyladenosine synthase 2"/>
    <property type="match status" value="1"/>
</dbReference>
<dbReference type="Gene3D" id="3.40.50.12160">
    <property type="entry name" value="Methylthiotransferase, N-terminal domain"/>
    <property type="match status" value="1"/>
</dbReference>
<dbReference type="Gene3D" id="2.40.50.140">
    <property type="entry name" value="Nucleic acid-binding proteins"/>
    <property type="match status" value="1"/>
</dbReference>
<dbReference type="Gene3D" id="3.80.30.20">
    <property type="entry name" value="tm_1862 like domain"/>
    <property type="match status" value="1"/>
</dbReference>
<dbReference type="HAMAP" id="MF_01865">
    <property type="entry name" value="MTTase_RimO"/>
    <property type="match status" value="1"/>
</dbReference>
<dbReference type="InterPro" id="IPR006638">
    <property type="entry name" value="Elp3/MiaA/NifB-like_rSAM"/>
</dbReference>
<dbReference type="InterPro" id="IPR005839">
    <property type="entry name" value="Methylthiotransferase"/>
</dbReference>
<dbReference type="InterPro" id="IPR020612">
    <property type="entry name" value="Methylthiotransferase_CS"/>
</dbReference>
<dbReference type="InterPro" id="IPR013848">
    <property type="entry name" value="Methylthiotransferase_N"/>
</dbReference>
<dbReference type="InterPro" id="IPR038135">
    <property type="entry name" value="Methylthiotransferase_N_sf"/>
</dbReference>
<dbReference type="InterPro" id="IPR012340">
    <property type="entry name" value="NA-bd_OB-fold"/>
</dbReference>
<dbReference type="InterPro" id="IPR005840">
    <property type="entry name" value="Ribosomal_uS12_MeSTrfase_RimO"/>
</dbReference>
<dbReference type="InterPro" id="IPR007197">
    <property type="entry name" value="rSAM"/>
</dbReference>
<dbReference type="InterPro" id="IPR023404">
    <property type="entry name" value="rSAM_horseshoe"/>
</dbReference>
<dbReference type="InterPro" id="IPR002792">
    <property type="entry name" value="TRAM_dom"/>
</dbReference>
<dbReference type="NCBIfam" id="TIGR01125">
    <property type="entry name" value="30S ribosomal protein S12 methylthiotransferase RimO"/>
    <property type="match status" value="1"/>
</dbReference>
<dbReference type="NCBIfam" id="TIGR00089">
    <property type="entry name" value="MiaB/RimO family radical SAM methylthiotransferase"/>
    <property type="match status" value="1"/>
</dbReference>
<dbReference type="PANTHER" id="PTHR43837">
    <property type="entry name" value="RIBOSOMAL PROTEIN S12 METHYLTHIOTRANSFERASE RIMO"/>
    <property type="match status" value="1"/>
</dbReference>
<dbReference type="PANTHER" id="PTHR43837:SF1">
    <property type="entry name" value="RIBOSOMAL PROTEIN US12 METHYLTHIOTRANSFERASE RIMO"/>
    <property type="match status" value="1"/>
</dbReference>
<dbReference type="Pfam" id="PF04055">
    <property type="entry name" value="Radical_SAM"/>
    <property type="match status" value="1"/>
</dbReference>
<dbReference type="Pfam" id="PF18693">
    <property type="entry name" value="TRAM_2"/>
    <property type="match status" value="1"/>
</dbReference>
<dbReference type="Pfam" id="PF00919">
    <property type="entry name" value="UPF0004"/>
    <property type="match status" value="1"/>
</dbReference>
<dbReference type="SFLD" id="SFLDG01082">
    <property type="entry name" value="B12-binding_domain_containing"/>
    <property type="match status" value="1"/>
</dbReference>
<dbReference type="SFLD" id="SFLDG01061">
    <property type="entry name" value="methylthiotransferase"/>
    <property type="match status" value="1"/>
</dbReference>
<dbReference type="SFLD" id="SFLDF00274">
    <property type="entry name" value="ribosomal_protein_S12_methylth"/>
    <property type="match status" value="1"/>
</dbReference>
<dbReference type="SMART" id="SM00729">
    <property type="entry name" value="Elp3"/>
    <property type="match status" value="1"/>
</dbReference>
<dbReference type="SUPFAM" id="SSF102114">
    <property type="entry name" value="Radical SAM enzymes"/>
    <property type="match status" value="1"/>
</dbReference>
<dbReference type="PROSITE" id="PS51449">
    <property type="entry name" value="MTTASE_N"/>
    <property type="match status" value="1"/>
</dbReference>
<dbReference type="PROSITE" id="PS01278">
    <property type="entry name" value="MTTASE_RADICAL"/>
    <property type="match status" value="1"/>
</dbReference>
<dbReference type="PROSITE" id="PS51918">
    <property type="entry name" value="RADICAL_SAM"/>
    <property type="match status" value="1"/>
</dbReference>
<dbReference type="PROSITE" id="PS50926">
    <property type="entry name" value="TRAM"/>
    <property type="match status" value="1"/>
</dbReference>
<name>RIMO_THEPX</name>
<proteinExistence type="inferred from homology"/>
<evidence type="ECO:0000255" key="1">
    <source>
        <dbReference type="HAMAP-Rule" id="MF_01865"/>
    </source>
</evidence>
<evidence type="ECO:0000255" key="2">
    <source>
        <dbReference type="PROSITE-ProRule" id="PRU01266"/>
    </source>
</evidence>
<protein>
    <recommendedName>
        <fullName evidence="1">Ribosomal protein uS12 methylthiotransferase RimO</fullName>
        <shortName evidence="1">uS12 MTTase</shortName>
        <shortName evidence="1">uS12 methylthiotransferase</shortName>
        <ecNumber evidence="1">2.8.4.4</ecNumber>
    </recommendedName>
    <alternativeName>
        <fullName evidence="1">Ribosomal protein uS12 (aspartate-C(3))-methylthiotransferase</fullName>
    </alternativeName>
    <alternativeName>
        <fullName evidence="1">Ribosome maturation factor RimO</fullName>
    </alternativeName>
</protein>
<accession>B0K1C1</accession>
<organism>
    <name type="scientific">Thermoanaerobacter sp. (strain X514)</name>
    <dbReference type="NCBI Taxonomy" id="399726"/>
    <lineage>
        <taxon>Bacteria</taxon>
        <taxon>Bacillati</taxon>
        <taxon>Bacillota</taxon>
        <taxon>Clostridia</taxon>
        <taxon>Thermoanaerobacterales</taxon>
        <taxon>Thermoanaerobacteraceae</taxon>
        <taxon>Thermoanaerobacter</taxon>
    </lineage>
</organism>
<reference key="1">
    <citation type="submission" date="2008-01" db="EMBL/GenBank/DDBJ databases">
        <title>Complete sequence of Thermoanaerobacter sp. X514.</title>
        <authorList>
            <consortium name="US DOE Joint Genome Institute"/>
            <person name="Copeland A."/>
            <person name="Lucas S."/>
            <person name="Lapidus A."/>
            <person name="Barry K."/>
            <person name="Glavina del Rio T."/>
            <person name="Dalin E."/>
            <person name="Tice H."/>
            <person name="Pitluck S."/>
            <person name="Bruce D."/>
            <person name="Goodwin L."/>
            <person name="Saunders E."/>
            <person name="Brettin T."/>
            <person name="Detter J.C."/>
            <person name="Han C."/>
            <person name="Schmutz J."/>
            <person name="Larimer F."/>
            <person name="Land M."/>
            <person name="Hauser L."/>
            <person name="Kyrpides N."/>
            <person name="Kim E."/>
            <person name="Hemme C."/>
            <person name="Fields M.W."/>
            <person name="He Z."/>
            <person name="Zhou J."/>
            <person name="Richardson P."/>
        </authorList>
    </citation>
    <scope>NUCLEOTIDE SEQUENCE [LARGE SCALE GENOMIC DNA]</scope>
    <source>
        <strain>X514</strain>
    </source>
</reference>
<sequence length="436" mass="50562">MKNVGIISLGCHKNTIDSEKMLAILKEKGYNIVNDENKADILIINTCGFIEDAKRESIECIIEMGKLKKHRLKYLIATGCLSERYNKELLKELPELDAVIGTGDFHKIAEVIEKIEKGKTVLEYGHANLLNDEGIQRILTTPNYYAYLKIAEGCSNACSFCIIPRLRGRYRSRKMEDILREAEELVKKGVKELILIAQDTTKYGVDVYKKFMLPQLLKEISKIDGLKWIRLLYAYPDSVTEELVEEIKNNEKIVKYIDIPLQHSHDEVLKRMNRNTNKQKIEEVISRLRSIPYMVIRTTFMVGFPGETEEEFEDLKQFVKEKRFERVGVFTYSREEGTKSYYMKPQIKKSVKIKRQQELMEIQKEISYQHNLSKVGKQLEVLIEGFEDGIYYGRSYMDAPEIDGVVYVKSDKKLKAGDFVVATITDAYEYDLVGEY</sequence>